<dbReference type="EC" id="5.2.1.8"/>
<dbReference type="EMBL" id="AP006716">
    <property type="protein sequence ID" value="BAE05306.1"/>
    <property type="molecule type" value="Genomic_DNA"/>
</dbReference>
<dbReference type="RefSeq" id="WP_011276264.1">
    <property type="nucleotide sequence ID" value="NC_007168.1"/>
</dbReference>
<dbReference type="SMR" id="Q4L4W9"/>
<dbReference type="KEGG" id="sha:SH1997"/>
<dbReference type="eggNOG" id="COG0652">
    <property type="taxonomic scope" value="Bacteria"/>
</dbReference>
<dbReference type="HOGENOM" id="CLU_012062_16_0_9"/>
<dbReference type="OrthoDB" id="9807797at2"/>
<dbReference type="Proteomes" id="UP000000543">
    <property type="component" value="Chromosome"/>
</dbReference>
<dbReference type="GO" id="GO:0003755">
    <property type="term" value="F:peptidyl-prolyl cis-trans isomerase activity"/>
    <property type="evidence" value="ECO:0007669"/>
    <property type="project" value="UniProtKB-KW"/>
</dbReference>
<dbReference type="Gene3D" id="2.40.100.10">
    <property type="entry name" value="Cyclophilin-like"/>
    <property type="match status" value="1"/>
</dbReference>
<dbReference type="InterPro" id="IPR029000">
    <property type="entry name" value="Cyclophilin-like_dom_sf"/>
</dbReference>
<dbReference type="InterPro" id="IPR024936">
    <property type="entry name" value="Cyclophilin-type_PPIase"/>
</dbReference>
<dbReference type="InterPro" id="IPR002130">
    <property type="entry name" value="Cyclophilin-type_PPIase_dom"/>
</dbReference>
<dbReference type="InterPro" id="IPR044666">
    <property type="entry name" value="Cyclophilin_A-like"/>
</dbReference>
<dbReference type="PANTHER" id="PTHR45625">
    <property type="entry name" value="PEPTIDYL-PROLYL CIS-TRANS ISOMERASE-RELATED"/>
    <property type="match status" value="1"/>
</dbReference>
<dbReference type="PANTHER" id="PTHR45625:SF4">
    <property type="entry name" value="PEPTIDYLPROLYL ISOMERASE DOMAIN AND WD REPEAT-CONTAINING PROTEIN 1"/>
    <property type="match status" value="1"/>
</dbReference>
<dbReference type="Pfam" id="PF00160">
    <property type="entry name" value="Pro_isomerase"/>
    <property type="match status" value="1"/>
</dbReference>
<dbReference type="PIRSF" id="PIRSF001467">
    <property type="entry name" value="Peptidylpro_ismrse"/>
    <property type="match status" value="1"/>
</dbReference>
<dbReference type="PRINTS" id="PR00153">
    <property type="entry name" value="CSAPPISMRASE"/>
</dbReference>
<dbReference type="SUPFAM" id="SSF50891">
    <property type="entry name" value="Cyclophilin-like"/>
    <property type="match status" value="1"/>
</dbReference>
<dbReference type="PROSITE" id="PS50072">
    <property type="entry name" value="CSA_PPIASE_2"/>
    <property type="match status" value="1"/>
</dbReference>
<protein>
    <recommendedName>
        <fullName>Putative peptidyl-prolyl cis-trans isomerase</fullName>
        <shortName>PPIase</shortName>
        <ecNumber>5.2.1.8</ecNumber>
    </recommendedName>
    <alternativeName>
        <fullName>Rotamase</fullName>
    </alternativeName>
</protein>
<reference key="1">
    <citation type="journal article" date="2005" name="J. Bacteriol.">
        <title>Whole-genome sequencing of Staphylococcus haemolyticus uncovers the extreme plasticity of its genome and the evolution of human-colonizing staphylococcal species.</title>
        <authorList>
            <person name="Takeuchi F."/>
            <person name="Watanabe S."/>
            <person name="Baba T."/>
            <person name="Yuzawa H."/>
            <person name="Ito T."/>
            <person name="Morimoto Y."/>
            <person name="Kuroda M."/>
            <person name="Cui L."/>
            <person name="Takahashi M."/>
            <person name="Ankai A."/>
            <person name="Baba S."/>
            <person name="Fukui S."/>
            <person name="Lee J.C."/>
            <person name="Hiramatsu K."/>
        </authorList>
    </citation>
    <scope>NUCLEOTIDE SEQUENCE [LARGE SCALE GENOMIC DNA]</scope>
    <source>
        <strain>JCSC1435</strain>
    </source>
</reference>
<evidence type="ECO:0000250" key="1"/>
<evidence type="ECO:0000255" key="2">
    <source>
        <dbReference type="PROSITE-ProRule" id="PRU00156"/>
    </source>
</evidence>
<evidence type="ECO:0000305" key="3"/>
<comment type="function">
    <text evidence="1">PPIases accelerate the folding of proteins. It catalyzes the cis-trans isomerization of proline imidic peptide bonds in oligopeptides (By similarity).</text>
</comment>
<comment type="catalytic activity">
    <reaction>
        <text>[protein]-peptidylproline (omega=180) = [protein]-peptidylproline (omega=0)</text>
        <dbReference type="Rhea" id="RHEA:16237"/>
        <dbReference type="Rhea" id="RHEA-COMP:10747"/>
        <dbReference type="Rhea" id="RHEA-COMP:10748"/>
        <dbReference type="ChEBI" id="CHEBI:83833"/>
        <dbReference type="ChEBI" id="CHEBI:83834"/>
        <dbReference type="EC" id="5.2.1.8"/>
    </reaction>
</comment>
<comment type="similarity">
    <text evidence="3">Belongs to the cyclophilin-type PPIase family.</text>
</comment>
<feature type="chain" id="PRO_0000299090" description="Putative peptidyl-prolyl cis-trans isomerase">
    <location>
        <begin position="1"/>
        <end position="198"/>
    </location>
</feature>
<feature type="domain" description="PPIase cyclophilin-type" evidence="2">
    <location>
        <begin position="14"/>
        <end position="195"/>
    </location>
</feature>
<gene>
    <name type="ordered locus">SH1997</name>
</gene>
<name>PPI1_STAHJ</name>
<organism>
    <name type="scientific">Staphylococcus haemolyticus (strain JCSC1435)</name>
    <dbReference type="NCBI Taxonomy" id="279808"/>
    <lineage>
        <taxon>Bacteria</taxon>
        <taxon>Bacillati</taxon>
        <taxon>Bacillota</taxon>
        <taxon>Bacilli</taxon>
        <taxon>Bacillales</taxon>
        <taxon>Staphylococcaceae</taxon>
        <taxon>Staphylococcus</taxon>
    </lineage>
</organism>
<accession>Q4L4W9</accession>
<sequence>MTNYPQLNKEIQDNEIKVAMHTNKGDMTFKLFPDIAPKTVENFVTHAKNGYYDGITFHRVINDFMIQGGDPTATGMGGESIYGGSFEDEFSLEAFNLYGALSMANAGPNTNGSQFFVVQMKEVPESMVNQLVDGGWPEPIAKAYADNGGTPWLDQKHTVFGQLIEGEATLEDIANTKVGAQDKPVHDVVIESIDVEDK</sequence>
<keyword id="KW-0413">Isomerase</keyword>
<keyword id="KW-0697">Rotamase</keyword>
<proteinExistence type="inferred from homology"/>